<reference key="1">
    <citation type="journal article" date="1993" name="Genomics">
        <title>Characterization of the chicken and quail homologues of the human gene responsible for the X-linked Kallmann syndrome.</title>
        <authorList>
            <person name="Legouis R."/>
            <person name="Cohen-Salmon M."/>
            <person name="del Castillo I."/>
            <person name="Levilliers J."/>
            <person name="Capy L."/>
            <person name="Mornon J.-P."/>
            <person name="Petit C."/>
        </authorList>
    </citation>
    <scope>NUCLEOTIDE SEQUENCE [MRNA]</scope>
</reference>
<dbReference type="EMBL" id="L13976">
    <property type="protein sequence ID" value="AAA88500.1"/>
    <property type="molecule type" value="mRNA"/>
</dbReference>
<dbReference type="RefSeq" id="NP_001310114.1">
    <property type="nucleotide sequence ID" value="NM_001323185.1"/>
</dbReference>
<dbReference type="MEROPS" id="I17.004"/>
<dbReference type="GlyCosmos" id="Q90369">
    <property type="glycosylation" value="6 sites, No reported glycans"/>
</dbReference>
<dbReference type="GeneID" id="107306124"/>
<dbReference type="KEGG" id="cjo:107306124"/>
<dbReference type="CTD" id="3730"/>
<dbReference type="OrthoDB" id="9985779at2759"/>
<dbReference type="Proteomes" id="UP000694412">
    <property type="component" value="Unplaced"/>
</dbReference>
<dbReference type="GO" id="GO:0009986">
    <property type="term" value="C:cell surface"/>
    <property type="evidence" value="ECO:0007669"/>
    <property type="project" value="UniProtKB-SubCell"/>
</dbReference>
<dbReference type="GO" id="GO:0005576">
    <property type="term" value="C:extracellular region"/>
    <property type="evidence" value="ECO:0007669"/>
    <property type="project" value="InterPro"/>
</dbReference>
<dbReference type="GO" id="GO:0004867">
    <property type="term" value="F:serine-type endopeptidase inhibitor activity"/>
    <property type="evidence" value="ECO:0007669"/>
    <property type="project" value="UniProtKB-KW"/>
</dbReference>
<dbReference type="GO" id="GO:0007155">
    <property type="term" value="P:cell adhesion"/>
    <property type="evidence" value="ECO:0007669"/>
    <property type="project" value="UniProtKB-KW"/>
</dbReference>
<dbReference type="GO" id="GO:0030182">
    <property type="term" value="P:neuron differentiation"/>
    <property type="evidence" value="ECO:0007669"/>
    <property type="project" value="TreeGrafter"/>
</dbReference>
<dbReference type="CDD" id="cd00063">
    <property type="entry name" value="FN3"/>
    <property type="match status" value="3"/>
</dbReference>
<dbReference type="CDD" id="cd00199">
    <property type="entry name" value="WAP"/>
    <property type="match status" value="1"/>
</dbReference>
<dbReference type="FunFam" id="2.60.40.10:FF:001414">
    <property type="entry name" value="Anosmin 1"/>
    <property type="match status" value="1"/>
</dbReference>
<dbReference type="FunFam" id="2.60.40.10:FF:001783">
    <property type="entry name" value="Anosmin 1"/>
    <property type="match status" value="1"/>
</dbReference>
<dbReference type="FunFam" id="4.10.75.10:FF:000001">
    <property type="entry name" value="Anosmin 1"/>
    <property type="match status" value="1"/>
</dbReference>
<dbReference type="Gene3D" id="4.10.75.10">
    <property type="entry name" value="Elafin-like"/>
    <property type="match status" value="1"/>
</dbReference>
<dbReference type="Gene3D" id="2.60.40.10">
    <property type="entry name" value="Immunoglobulins"/>
    <property type="match status" value="3"/>
</dbReference>
<dbReference type="InterPro" id="IPR042447">
    <property type="entry name" value="Anosmin-1"/>
</dbReference>
<dbReference type="InterPro" id="IPR040957">
    <property type="entry name" value="Anosmin-1_Cys_box"/>
</dbReference>
<dbReference type="InterPro" id="IPR036645">
    <property type="entry name" value="Elafin-like_sf"/>
</dbReference>
<dbReference type="InterPro" id="IPR003961">
    <property type="entry name" value="FN3_dom"/>
</dbReference>
<dbReference type="InterPro" id="IPR036116">
    <property type="entry name" value="FN3_sf"/>
</dbReference>
<dbReference type="InterPro" id="IPR013783">
    <property type="entry name" value="Ig-like_fold"/>
</dbReference>
<dbReference type="InterPro" id="IPR008197">
    <property type="entry name" value="WAP_dom"/>
</dbReference>
<dbReference type="PANTHER" id="PTHR14131">
    <property type="entry name" value="ANOSMIN"/>
    <property type="match status" value="1"/>
</dbReference>
<dbReference type="PANTHER" id="PTHR14131:SF5">
    <property type="entry name" value="ANOSMIN-1"/>
    <property type="match status" value="1"/>
</dbReference>
<dbReference type="Pfam" id="PF17869">
    <property type="entry name" value="Cys_box"/>
    <property type="match status" value="1"/>
</dbReference>
<dbReference type="Pfam" id="PF00041">
    <property type="entry name" value="fn3"/>
    <property type="match status" value="3"/>
</dbReference>
<dbReference type="Pfam" id="PF00095">
    <property type="entry name" value="WAP"/>
    <property type="match status" value="1"/>
</dbReference>
<dbReference type="PRINTS" id="PR00003">
    <property type="entry name" value="4DISULPHCORE"/>
</dbReference>
<dbReference type="SMART" id="SM00060">
    <property type="entry name" value="FN3"/>
    <property type="match status" value="3"/>
</dbReference>
<dbReference type="SMART" id="SM00217">
    <property type="entry name" value="WAP"/>
    <property type="match status" value="1"/>
</dbReference>
<dbReference type="SUPFAM" id="SSF57256">
    <property type="entry name" value="Elafin-like"/>
    <property type="match status" value="1"/>
</dbReference>
<dbReference type="SUPFAM" id="SSF49265">
    <property type="entry name" value="Fibronectin type III"/>
    <property type="match status" value="2"/>
</dbReference>
<dbReference type="PROSITE" id="PS50853">
    <property type="entry name" value="FN3"/>
    <property type="match status" value="3"/>
</dbReference>
<dbReference type="PROSITE" id="PS51390">
    <property type="entry name" value="WAP"/>
    <property type="match status" value="1"/>
</dbReference>
<proteinExistence type="evidence at transcript level"/>
<name>KALM_COTJA</name>
<keyword id="KW-0130">Cell adhesion</keyword>
<keyword id="KW-1015">Disulfide bond</keyword>
<keyword id="KW-0325">Glycoprotein</keyword>
<keyword id="KW-0646">Protease inhibitor</keyword>
<keyword id="KW-1185">Reference proteome</keyword>
<keyword id="KW-0677">Repeat</keyword>
<keyword id="KW-0722">Serine protease inhibitor</keyword>
<keyword id="KW-0732">Signal</keyword>
<protein>
    <recommendedName>
        <fullName evidence="2">Anosmin-1</fullName>
    </recommendedName>
    <alternativeName>
        <fullName evidence="2">Kallmann syndrome protein homolog</fullName>
    </alternativeName>
</protein>
<evidence type="ECO:0000250" key="1"/>
<evidence type="ECO:0000250" key="2">
    <source>
        <dbReference type="UniProtKB" id="P23352"/>
    </source>
</evidence>
<evidence type="ECO:0000255" key="3"/>
<evidence type="ECO:0000255" key="4">
    <source>
        <dbReference type="PROSITE-ProRule" id="PRU00316"/>
    </source>
</evidence>
<evidence type="ECO:0000255" key="5">
    <source>
        <dbReference type="PROSITE-ProRule" id="PRU00722"/>
    </source>
</evidence>
<evidence type="ECO:0000256" key="6">
    <source>
        <dbReference type="SAM" id="MobiDB-lite"/>
    </source>
</evidence>
<feature type="signal peptide" evidence="3">
    <location>
        <begin position="1"/>
        <end position="21"/>
    </location>
</feature>
<feature type="chain" id="PRO_0000041397" description="Anosmin-1">
    <location>
        <begin position="22"/>
        <end position="674"/>
    </location>
</feature>
<feature type="domain" description="WAP" evidence="5">
    <location>
        <begin position="121"/>
        <end position="170"/>
    </location>
</feature>
<feature type="domain" description="Fibronectin type-III 1" evidence="4">
    <location>
        <begin position="180"/>
        <end position="281"/>
    </location>
</feature>
<feature type="domain" description="Fibronectin type-III 2" evidence="4">
    <location>
        <begin position="286"/>
        <end position="392"/>
    </location>
</feature>
<feature type="domain" description="Fibronectin type-III 3" evidence="4">
    <location>
        <begin position="418"/>
        <end position="515"/>
    </location>
</feature>
<feature type="domain" description="Fibronectin type-III 4" evidence="4">
    <location>
        <begin position="545"/>
        <end position="652"/>
    </location>
</feature>
<feature type="region of interest" description="Disordered" evidence="6">
    <location>
        <begin position="388"/>
        <end position="413"/>
    </location>
</feature>
<feature type="region of interest" description="Disordered" evidence="6">
    <location>
        <begin position="655"/>
        <end position="674"/>
    </location>
</feature>
<feature type="compositionally biased region" description="Polar residues" evidence="6">
    <location>
        <begin position="388"/>
        <end position="402"/>
    </location>
</feature>
<feature type="compositionally biased region" description="Basic residues" evidence="6">
    <location>
        <begin position="656"/>
        <end position="668"/>
    </location>
</feature>
<feature type="glycosylation site" description="N-linked (GlcNAc...) asparagine" evidence="3">
    <location>
        <position position="65"/>
    </location>
</feature>
<feature type="glycosylation site" description="N-linked (GlcNAc...) asparagine" evidence="3">
    <location>
        <position position="203"/>
    </location>
</feature>
<feature type="glycosylation site" description="N-linked (GlcNAc...) asparagine" evidence="3">
    <location>
        <position position="294"/>
    </location>
</feature>
<feature type="glycosylation site" description="N-linked (GlcNAc...) asparagine" evidence="3">
    <location>
        <position position="465"/>
    </location>
</feature>
<feature type="glycosylation site" description="N-linked (GlcNAc...) asparagine" evidence="3">
    <location>
        <position position="548"/>
    </location>
</feature>
<feature type="glycosylation site" description="N-linked (GlcNAc...) asparagine" evidence="3">
    <location>
        <position position="559"/>
    </location>
</feature>
<feature type="disulfide bond" evidence="5">
    <location>
        <begin position="47"/>
        <end position="71"/>
    </location>
</feature>
<feature type="disulfide bond" evidence="5">
    <location>
        <begin position="80"/>
        <end position="99"/>
    </location>
</feature>
<feature type="disulfide bond" evidence="5">
    <location>
        <begin position="84"/>
        <end position="95"/>
    </location>
</feature>
<feature type="disulfide bond" evidence="5">
    <location>
        <begin position="110"/>
        <end position="114"/>
    </location>
</feature>
<sequence length="674" mass="76439">MVRRAPGASLALLLWVTAVSCSPAGPGAATARRQDEAFSTARLTSRCLSLQITRISAFFKHFQDNGSLAWCQNYKQCSKCLEPCKESWDLKRNHCQSFCEPLFPKKNYECLTSCEFLKYILSVKQGDCPAPEKASGFAAACFESCEADSECSGVKKCCSNGCGHTCQVPKNLYKGVPLKPRKELKFIELQSGDLEVKWSSKFNISIEPVIYVVQRRWNQGIHPSEDDATNWQTVAQTTDERVQLSDIRASRWYQFRVAAVNVHGTRGFTAPSKHFRSSKDPSAPPAPSNIRIANISANNDGTVNVMITWDLPEEPDIPVHHYKVFWSWTYSKYVIPAKKKRRKITDGPQNYVVLEGLQPNSNYNVELQAVTRWGQIRLKSAKVSLHFSTTQDNRNNNEQTSVEKPPKGVVDPYPTFQRRKPTRFLKIGTPFYQDNQLQVKIYWKKSGINMNQFQVHSLLESCTHNDTKGLEKVTELTYENYMILKDLSFSCKYKVTVLPAKSKSRFKAESIFFVTPPCSTFKEKTHKHINCAAEEVPVLPKVLAKPENLSASFIVQEGNITGHFSWKISKAVLHQPMTGFQVTWAEVTTESRQNSLPNSIISQSQILPADHYVLTVPNLRPSMLYRLEVQVLTTGGEGPATIKLFRTPDLPPFLPHRPHLKHHPHRYKPPPEKY</sequence>
<accession>Q90369</accession>
<organism>
    <name type="scientific">Coturnix japonica</name>
    <name type="common">Japanese quail</name>
    <name type="synonym">Coturnix coturnix japonica</name>
    <dbReference type="NCBI Taxonomy" id="93934"/>
    <lineage>
        <taxon>Eukaryota</taxon>
        <taxon>Metazoa</taxon>
        <taxon>Chordata</taxon>
        <taxon>Craniata</taxon>
        <taxon>Vertebrata</taxon>
        <taxon>Euteleostomi</taxon>
        <taxon>Archelosauria</taxon>
        <taxon>Archosauria</taxon>
        <taxon>Dinosauria</taxon>
        <taxon>Saurischia</taxon>
        <taxon>Theropoda</taxon>
        <taxon>Coelurosauria</taxon>
        <taxon>Aves</taxon>
        <taxon>Neognathae</taxon>
        <taxon>Galloanserae</taxon>
        <taxon>Galliformes</taxon>
        <taxon>Phasianidae</taxon>
        <taxon>Perdicinae</taxon>
        <taxon>Coturnix</taxon>
    </lineage>
</organism>
<comment type="function">
    <text>May be an adhesion-like molecule with anti-protease activity.</text>
</comment>
<comment type="subcellular location">
    <subcellularLocation>
        <location evidence="1">Cell surface</location>
    </subcellularLocation>
</comment>
<gene>
    <name evidence="2" type="primary">ANOS1</name>
    <name type="synonym">KAL</name>
    <name type="synonym">KAL1</name>
</gene>